<gene>
    <name evidence="1" type="primary">proS</name>
    <name type="ordered locus">sll1425</name>
</gene>
<protein>
    <recommendedName>
        <fullName evidence="1">Proline--tRNA ligase</fullName>
        <ecNumber evidence="1">6.1.1.15</ecNumber>
    </recommendedName>
    <alternativeName>
        <fullName evidence="1">Prolyl-tRNA synthetase</fullName>
        <shortName evidence="1">ProRS</shortName>
    </alternativeName>
</protein>
<accession>P73942</accession>
<dbReference type="EC" id="6.1.1.15" evidence="1"/>
<dbReference type="EMBL" id="BA000022">
    <property type="protein sequence ID" value="BAA18008.1"/>
    <property type="status" value="ALT_INIT"/>
    <property type="molecule type" value="Genomic_DNA"/>
</dbReference>
<dbReference type="PIR" id="S75447">
    <property type="entry name" value="S75447"/>
</dbReference>
<dbReference type="SMR" id="P73942"/>
<dbReference type="FunCoup" id="P73942">
    <property type="interactions" value="341"/>
</dbReference>
<dbReference type="STRING" id="1148.gene:10498878"/>
<dbReference type="PaxDb" id="1148-1653092"/>
<dbReference type="EnsemblBacteria" id="BAA18008">
    <property type="protein sequence ID" value="BAA18008"/>
    <property type="gene ID" value="BAA18008"/>
</dbReference>
<dbReference type="KEGG" id="syn:sll1425"/>
<dbReference type="eggNOG" id="COG0442">
    <property type="taxonomic scope" value="Bacteria"/>
</dbReference>
<dbReference type="InParanoid" id="P73942"/>
<dbReference type="PhylomeDB" id="P73942"/>
<dbReference type="Proteomes" id="UP000001425">
    <property type="component" value="Chromosome"/>
</dbReference>
<dbReference type="GO" id="GO:0005829">
    <property type="term" value="C:cytosol"/>
    <property type="evidence" value="ECO:0000318"/>
    <property type="project" value="GO_Central"/>
</dbReference>
<dbReference type="GO" id="GO:0002161">
    <property type="term" value="F:aminoacyl-tRNA deacylase activity"/>
    <property type="evidence" value="ECO:0007669"/>
    <property type="project" value="InterPro"/>
</dbReference>
<dbReference type="GO" id="GO:0005524">
    <property type="term" value="F:ATP binding"/>
    <property type="evidence" value="ECO:0007669"/>
    <property type="project" value="UniProtKB-UniRule"/>
</dbReference>
<dbReference type="GO" id="GO:0004827">
    <property type="term" value="F:proline-tRNA ligase activity"/>
    <property type="evidence" value="ECO:0000318"/>
    <property type="project" value="GO_Central"/>
</dbReference>
<dbReference type="GO" id="GO:0006433">
    <property type="term" value="P:prolyl-tRNA aminoacylation"/>
    <property type="evidence" value="ECO:0000318"/>
    <property type="project" value="GO_Central"/>
</dbReference>
<dbReference type="CDD" id="cd04334">
    <property type="entry name" value="ProRS-INS"/>
    <property type="match status" value="1"/>
</dbReference>
<dbReference type="CDD" id="cd00861">
    <property type="entry name" value="ProRS_anticodon_short"/>
    <property type="match status" value="1"/>
</dbReference>
<dbReference type="CDD" id="cd00779">
    <property type="entry name" value="ProRS_core_prok"/>
    <property type="match status" value="1"/>
</dbReference>
<dbReference type="FunFam" id="3.30.930.10:FF:000167">
    <property type="entry name" value="Proline--tRNA ligase"/>
    <property type="match status" value="1"/>
</dbReference>
<dbReference type="FunFam" id="3.40.50.800:FF:000011">
    <property type="entry name" value="Proline--tRNA ligase"/>
    <property type="match status" value="1"/>
</dbReference>
<dbReference type="Gene3D" id="3.40.50.800">
    <property type="entry name" value="Anticodon-binding domain"/>
    <property type="match status" value="1"/>
</dbReference>
<dbReference type="Gene3D" id="3.30.930.10">
    <property type="entry name" value="Bira Bifunctional Protein, Domain 2"/>
    <property type="match status" value="2"/>
</dbReference>
<dbReference type="HAMAP" id="MF_01569">
    <property type="entry name" value="Pro_tRNA_synth_type1"/>
    <property type="match status" value="1"/>
</dbReference>
<dbReference type="InterPro" id="IPR002314">
    <property type="entry name" value="aa-tRNA-synt_IIb"/>
</dbReference>
<dbReference type="InterPro" id="IPR006195">
    <property type="entry name" value="aa-tRNA-synth_II"/>
</dbReference>
<dbReference type="InterPro" id="IPR045864">
    <property type="entry name" value="aa-tRNA-synth_II/BPL/LPL"/>
</dbReference>
<dbReference type="InterPro" id="IPR004154">
    <property type="entry name" value="Anticodon-bd"/>
</dbReference>
<dbReference type="InterPro" id="IPR036621">
    <property type="entry name" value="Anticodon-bd_dom_sf"/>
</dbReference>
<dbReference type="InterPro" id="IPR002316">
    <property type="entry name" value="Pro-tRNA-ligase_IIa"/>
</dbReference>
<dbReference type="InterPro" id="IPR004500">
    <property type="entry name" value="Pro-tRNA-synth_IIa_bac-type"/>
</dbReference>
<dbReference type="InterPro" id="IPR023717">
    <property type="entry name" value="Pro-tRNA-Synthase_IIa_type1"/>
</dbReference>
<dbReference type="InterPro" id="IPR050062">
    <property type="entry name" value="Pro-tRNA_synthetase"/>
</dbReference>
<dbReference type="InterPro" id="IPR044140">
    <property type="entry name" value="ProRS_anticodon_short"/>
</dbReference>
<dbReference type="InterPro" id="IPR033730">
    <property type="entry name" value="ProRS_core_prok"/>
</dbReference>
<dbReference type="InterPro" id="IPR036754">
    <property type="entry name" value="YbaK/aa-tRNA-synt-asso_dom_sf"/>
</dbReference>
<dbReference type="InterPro" id="IPR007214">
    <property type="entry name" value="YbaK/aa-tRNA-synth-assoc-dom"/>
</dbReference>
<dbReference type="NCBIfam" id="NF006625">
    <property type="entry name" value="PRK09194.1"/>
    <property type="match status" value="1"/>
</dbReference>
<dbReference type="NCBIfam" id="TIGR00409">
    <property type="entry name" value="proS_fam_II"/>
    <property type="match status" value="1"/>
</dbReference>
<dbReference type="PANTHER" id="PTHR42753">
    <property type="entry name" value="MITOCHONDRIAL RIBOSOME PROTEIN L39/PROLYL-TRNA LIGASE FAMILY MEMBER"/>
    <property type="match status" value="1"/>
</dbReference>
<dbReference type="PANTHER" id="PTHR42753:SF2">
    <property type="entry name" value="PROLINE--TRNA LIGASE"/>
    <property type="match status" value="1"/>
</dbReference>
<dbReference type="Pfam" id="PF03129">
    <property type="entry name" value="HGTP_anticodon"/>
    <property type="match status" value="1"/>
</dbReference>
<dbReference type="Pfam" id="PF00587">
    <property type="entry name" value="tRNA-synt_2b"/>
    <property type="match status" value="1"/>
</dbReference>
<dbReference type="Pfam" id="PF04073">
    <property type="entry name" value="tRNA_edit"/>
    <property type="match status" value="1"/>
</dbReference>
<dbReference type="PRINTS" id="PR01046">
    <property type="entry name" value="TRNASYNTHPRO"/>
</dbReference>
<dbReference type="SUPFAM" id="SSF52954">
    <property type="entry name" value="Class II aaRS ABD-related"/>
    <property type="match status" value="1"/>
</dbReference>
<dbReference type="SUPFAM" id="SSF55681">
    <property type="entry name" value="Class II aaRS and biotin synthetases"/>
    <property type="match status" value="1"/>
</dbReference>
<dbReference type="SUPFAM" id="SSF55826">
    <property type="entry name" value="YbaK/ProRS associated domain"/>
    <property type="match status" value="1"/>
</dbReference>
<dbReference type="PROSITE" id="PS50862">
    <property type="entry name" value="AA_TRNA_LIGASE_II"/>
    <property type="match status" value="1"/>
</dbReference>
<feature type="chain" id="PRO_0000139347" description="Proline--tRNA ligase">
    <location>
        <begin position="1"/>
        <end position="603"/>
    </location>
</feature>
<proteinExistence type="inferred from homology"/>
<name>SYP_SYNY3</name>
<sequence>MRLSQMLFVTLRDDPADAEIPSHKLLVRAGFIRRLGSGLYAYLPLIWRVLEKVKRIVQEEMNRTGAQECLLPQLQPSELWKMSGRWDTYTESEGIMFALRDRLERELGLGPTHEEVITAIAKEMIRSYRQLPVNLYQIQTKFRDEIRPRFGLMRGREFIMKDAYSFHSDEASLKATYGAMDQAYRNIFSRCGLDFRPVDADSGAIGGSGSQEFMVLADAGEDEILYTEDGLYSANVEKAVSLAPDAKPSPFSGYKKQSAPNTATIAKMCQCLDCDASNVVKNVLYQAVYNSGKAVLVLVSIRGDQEVNEVKLTNELTKLAPHYESTNILSLTVPDEKEQQKWAAKPLPLGYISPGISDDYIATNKQVADKFLRLVDQTAVDLTNFATGADAVDYHVTGANWSTDFTLPKLVVDVRKALAGDRPVHDPTGELKTARGIEVGHIFQLGTKYSQAMGATFTNEQGEEKPLVMGCYGIGVSRLAQAAVEQSYDKDGIIWPTAIAPYEVVIVVPNVGDEEQMQVAEQIYTEFQAAEVDVLLDDRNERAGVKFKDSELIGIPYRVVTGKSLKQGQLEVVKRADKSVQNLAIAAVVPTLTAWIKAEKKTS</sequence>
<evidence type="ECO:0000255" key="1">
    <source>
        <dbReference type="HAMAP-Rule" id="MF_01569"/>
    </source>
</evidence>
<evidence type="ECO:0000305" key="2"/>
<reference key="1">
    <citation type="journal article" date="1996" name="DNA Res.">
        <title>Sequence analysis of the genome of the unicellular cyanobacterium Synechocystis sp. strain PCC6803. II. Sequence determination of the entire genome and assignment of potential protein-coding regions.</title>
        <authorList>
            <person name="Kaneko T."/>
            <person name="Sato S."/>
            <person name="Kotani H."/>
            <person name="Tanaka A."/>
            <person name="Asamizu E."/>
            <person name="Nakamura Y."/>
            <person name="Miyajima N."/>
            <person name="Hirosawa M."/>
            <person name="Sugiura M."/>
            <person name="Sasamoto S."/>
            <person name="Kimura T."/>
            <person name="Hosouchi T."/>
            <person name="Matsuno A."/>
            <person name="Muraki A."/>
            <person name="Nakazaki N."/>
            <person name="Naruo K."/>
            <person name="Okumura S."/>
            <person name="Shimpo S."/>
            <person name="Takeuchi C."/>
            <person name="Wada T."/>
            <person name="Watanabe A."/>
            <person name="Yamada M."/>
            <person name="Yasuda M."/>
            <person name="Tabata S."/>
        </authorList>
    </citation>
    <scope>NUCLEOTIDE SEQUENCE [LARGE SCALE GENOMIC DNA]</scope>
    <source>
        <strain>ATCC 27184 / PCC 6803 / Kazusa</strain>
    </source>
</reference>
<keyword id="KW-0030">Aminoacyl-tRNA synthetase</keyword>
<keyword id="KW-0067">ATP-binding</keyword>
<keyword id="KW-0963">Cytoplasm</keyword>
<keyword id="KW-0436">Ligase</keyword>
<keyword id="KW-0547">Nucleotide-binding</keyword>
<keyword id="KW-0648">Protein biosynthesis</keyword>
<keyword id="KW-1185">Reference proteome</keyword>
<organism>
    <name type="scientific">Synechocystis sp. (strain ATCC 27184 / PCC 6803 / Kazusa)</name>
    <dbReference type="NCBI Taxonomy" id="1111708"/>
    <lineage>
        <taxon>Bacteria</taxon>
        <taxon>Bacillati</taxon>
        <taxon>Cyanobacteriota</taxon>
        <taxon>Cyanophyceae</taxon>
        <taxon>Synechococcales</taxon>
        <taxon>Merismopediaceae</taxon>
        <taxon>Synechocystis</taxon>
    </lineage>
</organism>
<comment type="function">
    <text evidence="1">Catalyzes the attachment of proline to tRNA(Pro) in a two-step reaction: proline is first activated by ATP to form Pro-AMP and then transferred to the acceptor end of tRNA(Pro). As ProRS can inadvertently accommodate and process non-cognate amino acids such as alanine and cysteine, to avoid such errors it has two additional distinct editing activities against alanine. One activity is designated as 'pretransfer' editing and involves the tRNA(Pro)-independent hydrolysis of activated Ala-AMP. The other activity is designated 'posttransfer' editing and involves deacylation of mischarged Ala-tRNA(Pro). The misacylated Cys-tRNA(Pro) is not edited by ProRS.</text>
</comment>
<comment type="catalytic activity">
    <reaction evidence="1">
        <text>tRNA(Pro) + L-proline + ATP = L-prolyl-tRNA(Pro) + AMP + diphosphate</text>
        <dbReference type="Rhea" id="RHEA:14305"/>
        <dbReference type="Rhea" id="RHEA-COMP:9700"/>
        <dbReference type="Rhea" id="RHEA-COMP:9702"/>
        <dbReference type="ChEBI" id="CHEBI:30616"/>
        <dbReference type="ChEBI" id="CHEBI:33019"/>
        <dbReference type="ChEBI" id="CHEBI:60039"/>
        <dbReference type="ChEBI" id="CHEBI:78442"/>
        <dbReference type="ChEBI" id="CHEBI:78532"/>
        <dbReference type="ChEBI" id="CHEBI:456215"/>
        <dbReference type="EC" id="6.1.1.15"/>
    </reaction>
</comment>
<comment type="subunit">
    <text evidence="1">Homodimer.</text>
</comment>
<comment type="subcellular location">
    <subcellularLocation>
        <location evidence="1">Cytoplasm</location>
    </subcellularLocation>
</comment>
<comment type="domain">
    <text evidence="1">Consists of three domains: the N-terminal catalytic domain, the editing domain and the C-terminal anticodon-binding domain.</text>
</comment>
<comment type="similarity">
    <text evidence="1">Belongs to the class-II aminoacyl-tRNA synthetase family. ProS type 1 subfamily.</text>
</comment>
<comment type="sequence caution" evidence="2">
    <conflict type="erroneous initiation">
        <sequence resource="EMBL-CDS" id="BAA18008"/>
    </conflict>
</comment>